<evidence type="ECO:0000250" key="1"/>
<evidence type="ECO:0000250" key="2">
    <source>
        <dbReference type="UniProtKB" id="P09626"/>
    </source>
</evidence>
<evidence type="ECO:0000250" key="3">
    <source>
        <dbReference type="UniProtKB" id="P19156"/>
    </source>
</evidence>
<evidence type="ECO:0000250" key="4">
    <source>
        <dbReference type="UniProtKB" id="P20648"/>
    </source>
</evidence>
<evidence type="ECO:0000250" key="5">
    <source>
        <dbReference type="UniProtKB" id="P50993"/>
    </source>
</evidence>
<evidence type="ECO:0000250" key="6">
    <source>
        <dbReference type="UniProtKB" id="Q6PIE5"/>
    </source>
</evidence>
<evidence type="ECO:0000255" key="7"/>
<evidence type="ECO:0000256" key="8">
    <source>
        <dbReference type="SAM" id="MobiDB-lite"/>
    </source>
</evidence>
<evidence type="ECO:0000269" key="9">
    <source>
    </source>
</evidence>
<evidence type="ECO:0000269" key="10">
    <source>
    </source>
</evidence>
<evidence type="ECO:0000303" key="11">
    <source>
    </source>
</evidence>
<evidence type="ECO:0000305" key="12"/>
<evidence type="ECO:0000305" key="13">
    <source>
    </source>
</evidence>
<evidence type="ECO:0000312" key="14">
    <source>
        <dbReference type="MGI" id="MGI:88113"/>
    </source>
</evidence>
<accession>Q64436</accession>
<accession>E9QNX7</accession>
<accession>Q9CV46</accession>
<sequence>MGKAENYELYSVELGSGPGGDMTAKMSKKKAGGGGGKKKEKLENMKKEMEINDHQLSVSELEQKYQTSATKGLKASLAAELLLRDGPNALRPPRGTPEYVKFARQLAGGLQCLMWVAAAICLIAFAIQASEGDLTTDDNLYLAVALIAVVVVTGCFGYYQEFKSTNIIASFKNLVPQQATVIRDGDKFQINADQLVVGDLVEMKGGDRVPADIRILSAQGCKVDNSSLTGESEPQTRSPECTHESPLETRNIAFFSTMCLEGTAQGLVVSTGDRTIIGRIASLASGVENEKTPIAIEIEHFVDIIAGLAILFGATFFVVAMCIGYTFLRAMVFFMAIVVAYVPEGLLATVTVCLSLTAKRLASKNCVVKNLEAVETLGSTSVICSDKTGTLTQNRMTVSHLWFDNHIHTADTTEDQSGQTFDQSSETWRALCRVLTLCNRAAFKSGQDAVPVPKRIVIGDASETALLKFSELTLGNAMGYRDRFPKVCEIPFNSINKFQLSIHTLEDPRDSRHLLVMKGAPERVLERCSSILIKGQELPLDEQWREAFQTAYLSLGGLGERVLGFCQLYLNEKDYPPGYAFDVEAMNFPSSGLCFAGLVSMIDPPRATVPDAVLKCRTAGIRVIMVTGDHPITAKAIAASVGIISEGSETVEDIAARLRMPVDQVNRKDARACVINGMQLKDMDPSELVEALRTHPEMVFARTSPQQKLVIVESCQRLGAIVAVTGDGVNDSPALKKADIGVAMGIAGSDAAKNAADMILLDDNFASIVTGVEQGRLIFDNLKKSIAYTLTKNIPELTPYLIYITVSVPLPLGCITILFIELCTDIFPSVSLAYEKAESDIMHLRPRNPKRDRLVNEPLAAYSYFQIGAIQSFAGFADYFTAMAQEGWFPLLCVGLRPQWEDHHLQDLQDSYGQEWTFGQRLYQQYTCYTVFFISIEMCQIADVLIRKTRRLSVFQQGFFRNKILVIAIVFQVCIGCFLCYCPGMPNIFNFMPIRFQWWLVPMPFGLLIFVYDEIRKLGVRCCPGSWWDQELYY</sequence>
<keyword id="KW-0067">ATP-binding</keyword>
<keyword id="KW-1003">Cell membrane</keyword>
<keyword id="KW-0903">Direct protein sequencing</keyword>
<keyword id="KW-0375">Hydrogen ion transport</keyword>
<keyword id="KW-0406">Ion transport</keyword>
<keyword id="KW-0460">Magnesium</keyword>
<keyword id="KW-0472">Membrane</keyword>
<keyword id="KW-0479">Metal-binding</keyword>
<keyword id="KW-0547">Nucleotide-binding</keyword>
<keyword id="KW-0597">Phosphoprotein</keyword>
<keyword id="KW-0630">Potassium</keyword>
<keyword id="KW-0633">Potassium transport</keyword>
<keyword id="KW-1185">Reference proteome</keyword>
<keyword id="KW-1278">Translocase</keyword>
<keyword id="KW-0812">Transmembrane</keyword>
<keyword id="KW-1133">Transmembrane helix</keyword>
<keyword id="KW-0813">Transport</keyword>
<gene>
    <name evidence="14" type="primary">Atp4a</name>
</gene>
<protein>
    <recommendedName>
        <fullName>Potassium-transporting ATPase alpha chain 1</fullName>
        <ecNumber evidence="10">7.2.2.19</ecNumber>
    </recommendedName>
    <alternativeName>
        <fullName evidence="11">Gastric H(+)/K(+) ATPase subunit alpha</fullName>
    </alternativeName>
    <alternativeName>
        <fullName>Proton pump</fullName>
    </alternativeName>
</protein>
<dbReference type="EC" id="7.2.2.19" evidence="10"/>
<dbReference type="EMBL" id="U17282">
    <property type="protein sequence ID" value="AAA79514.1"/>
    <property type="molecule type" value="mRNA"/>
</dbReference>
<dbReference type="EMBL" id="JH584274">
    <property type="status" value="NOT_ANNOTATED_CDS"/>
    <property type="molecule type" value="Genomic_DNA"/>
</dbReference>
<dbReference type="EMBL" id="AK009676">
    <property type="protein sequence ID" value="BAB26432.1"/>
    <property type="molecule type" value="mRNA"/>
</dbReference>
<dbReference type="CCDS" id="CCDS71932.1"/>
<dbReference type="PIR" id="I49143">
    <property type="entry name" value="I49143"/>
</dbReference>
<dbReference type="RefSeq" id="NP_001277556.1">
    <property type="nucleotide sequence ID" value="NM_001290627.1"/>
</dbReference>
<dbReference type="SMR" id="Q64436"/>
<dbReference type="ComplexPortal" id="CPX-3075">
    <property type="entry name" value="Hydrogen:potassium-exchanging ATPase complex"/>
</dbReference>
<dbReference type="FunCoup" id="Q64436">
    <property type="interactions" value="268"/>
</dbReference>
<dbReference type="IntAct" id="Q64436">
    <property type="interactions" value="1"/>
</dbReference>
<dbReference type="MINT" id="Q64436"/>
<dbReference type="STRING" id="10090.ENSMUSP00000005692"/>
<dbReference type="GlyGen" id="Q64436">
    <property type="glycosylation" value="3 sites, 3 N-linked glycans (2 sites), 1 O-linked glycan (1 site)"/>
</dbReference>
<dbReference type="iPTMnet" id="Q64436"/>
<dbReference type="PhosphoSitePlus" id="Q64436"/>
<dbReference type="SwissPalm" id="Q64436"/>
<dbReference type="jPOST" id="Q64436"/>
<dbReference type="PaxDb" id="10090-ENSMUSP00000005692"/>
<dbReference type="ProteomicsDB" id="265166"/>
<dbReference type="ProteomicsDB" id="314823"/>
<dbReference type="Antibodypedia" id="48214">
    <property type="antibodies" value="49 antibodies from 13 providers"/>
</dbReference>
<dbReference type="DNASU" id="11944"/>
<dbReference type="Ensembl" id="ENSMUST00000005692.14">
    <property type="protein sequence ID" value="ENSMUSP00000005692.7"/>
    <property type="gene ID" value="ENSMUSG00000005553.15"/>
</dbReference>
<dbReference type="GeneID" id="11944"/>
<dbReference type="KEGG" id="mmu:11944"/>
<dbReference type="AGR" id="MGI:88113"/>
<dbReference type="CTD" id="495"/>
<dbReference type="MGI" id="MGI:88113">
    <property type="gene designation" value="Atp4a"/>
</dbReference>
<dbReference type="VEuPathDB" id="HostDB:ENSMUSG00000005553"/>
<dbReference type="eggNOG" id="KOG0203">
    <property type="taxonomic scope" value="Eukaryota"/>
</dbReference>
<dbReference type="GeneTree" id="ENSGT00940000160297"/>
<dbReference type="HOGENOM" id="CLU_002360_4_1_1"/>
<dbReference type="InParanoid" id="Q64436"/>
<dbReference type="OMA" id="PVQKDCD"/>
<dbReference type="OrthoDB" id="23269at9989"/>
<dbReference type="TreeFam" id="TF312838"/>
<dbReference type="Reactome" id="R-MMU-936837">
    <property type="pathway name" value="Ion transport by P-type ATPases"/>
</dbReference>
<dbReference type="BioGRID-ORCS" id="11944">
    <property type="hits" value="4 hits in 79 CRISPR screens"/>
</dbReference>
<dbReference type="CD-CODE" id="CE726F99">
    <property type="entry name" value="Postsynaptic density"/>
</dbReference>
<dbReference type="PRO" id="PR:Q64436"/>
<dbReference type="Proteomes" id="UP000000589">
    <property type="component" value="Chromosome 7"/>
</dbReference>
<dbReference type="RNAct" id="Q64436">
    <property type="molecule type" value="protein"/>
</dbReference>
<dbReference type="Bgee" id="ENSMUSG00000005553">
    <property type="expression patterns" value="Expressed in epithelium of stomach and 71 other cell types or tissues"/>
</dbReference>
<dbReference type="GO" id="GO:0016324">
    <property type="term" value="C:apical plasma membrane"/>
    <property type="evidence" value="ECO:0007669"/>
    <property type="project" value="UniProtKB-SubCell"/>
</dbReference>
<dbReference type="GO" id="GO:0005886">
    <property type="term" value="C:plasma membrane"/>
    <property type="evidence" value="ECO:0000314"/>
    <property type="project" value="MGI"/>
</dbReference>
<dbReference type="GO" id="GO:0005889">
    <property type="term" value="C:potassium:proton exchanging ATPase complex"/>
    <property type="evidence" value="ECO:0000266"/>
    <property type="project" value="ComplexPortal"/>
</dbReference>
<dbReference type="GO" id="GO:0005524">
    <property type="term" value="F:ATP binding"/>
    <property type="evidence" value="ECO:0007669"/>
    <property type="project" value="UniProtKB-KW"/>
</dbReference>
<dbReference type="GO" id="GO:0016887">
    <property type="term" value="F:ATP hydrolysis activity"/>
    <property type="evidence" value="ECO:0007669"/>
    <property type="project" value="InterPro"/>
</dbReference>
<dbReference type="GO" id="GO:0000287">
    <property type="term" value="F:magnesium ion binding"/>
    <property type="evidence" value="ECO:0000250"/>
    <property type="project" value="UniProtKB"/>
</dbReference>
<dbReference type="GO" id="GO:0008900">
    <property type="term" value="F:P-type potassium:proton transporter activity"/>
    <property type="evidence" value="ECO:0000314"/>
    <property type="project" value="MGI"/>
</dbReference>
<dbReference type="GO" id="GO:0030955">
    <property type="term" value="F:potassium ion binding"/>
    <property type="evidence" value="ECO:0000250"/>
    <property type="project" value="UniProtKB"/>
</dbReference>
<dbReference type="GO" id="GO:0045851">
    <property type="term" value="P:pH reduction"/>
    <property type="evidence" value="ECO:0000314"/>
    <property type="project" value="MGI"/>
</dbReference>
<dbReference type="GO" id="GO:0071805">
    <property type="term" value="P:potassium ion transmembrane transport"/>
    <property type="evidence" value="ECO:0000266"/>
    <property type="project" value="ComplexPortal"/>
</dbReference>
<dbReference type="GO" id="GO:0010155">
    <property type="term" value="P:regulation of proton transport"/>
    <property type="evidence" value="ECO:0000314"/>
    <property type="project" value="MGI"/>
</dbReference>
<dbReference type="GO" id="GO:0009410">
    <property type="term" value="P:response to xenobiotic stimulus"/>
    <property type="evidence" value="ECO:0000314"/>
    <property type="project" value="MGI"/>
</dbReference>
<dbReference type="CDD" id="cd02608">
    <property type="entry name" value="P-type_ATPase_Na-K_like"/>
    <property type="match status" value="1"/>
</dbReference>
<dbReference type="FunFam" id="3.40.50.1000:FF:000001">
    <property type="entry name" value="Phospholipid-transporting ATPase IC"/>
    <property type="match status" value="1"/>
</dbReference>
<dbReference type="FunFam" id="1.20.1110.10:FF:000079">
    <property type="entry name" value="Sodium/potassium-transporting ATPase subunit alpha"/>
    <property type="match status" value="1"/>
</dbReference>
<dbReference type="FunFam" id="2.70.150.10:FF:000003">
    <property type="entry name" value="Sodium/potassium-transporting ATPase subunit alpha"/>
    <property type="match status" value="1"/>
</dbReference>
<dbReference type="FunFam" id="3.40.1110.10:FF:000001">
    <property type="entry name" value="Sodium/potassium-transporting ATPase subunit alpha"/>
    <property type="match status" value="1"/>
</dbReference>
<dbReference type="FunFam" id="3.40.50.1000:FF:000004">
    <property type="entry name" value="Sodium/potassium-transporting ATPase subunit alpha"/>
    <property type="match status" value="1"/>
</dbReference>
<dbReference type="FunFam" id="1.20.1110.10:FF:000095">
    <property type="entry name" value="Sodium/potassium-transporting ATPase subunit alpha-1"/>
    <property type="match status" value="1"/>
</dbReference>
<dbReference type="Gene3D" id="3.40.1110.10">
    <property type="entry name" value="Calcium-transporting ATPase, cytoplasmic domain N"/>
    <property type="match status" value="1"/>
</dbReference>
<dbReference type="Gene3D" id="2.70.150.10">
    <property type="entry name" value="Calcium-transporting ATPase, cytoplasmic transduction domain A"/>
    <property type="match status" value="1"/>
</dbReference>
<dbReference type="Gene3D" id="1.20.1110.10">
    <property type="entry name" value="Calcium-transporting ATPase, transmembrane domain"/>
    <property type="match status" value="1"/>
</dbReference>
<dbReference type="Gene3D" id="3.40.50.1000">
    <property type="entry name" value="HAD superfamily/HAD-like"/>
    <property type="match status" value="1"/>
</dbReference>
<dbReference type="InterPro" id="IPR006068">
    <property type="entry name" value="ATPase_P-typ_cation-transptr_C"/>
</dbReference>
<dbReference type="InterPro" id="IPR004014">
    <property type="entry name" value="ATPase_P-typ_cation-transptr_N"/>
</dbReference>
<dbReference type="InterPro" id="IPR023299">
    <property type="entry name" value="ATPase_P-typ_cyto_dom_N"/>
</dbReference>
<dbReference type="InterPro" id="IPR015127">
    <property type="entry name" value="ATPase_P-typ_H/K-transp_N"/>
</dbReference>
<dbReference type="InterPro" id="IPR018303">
    <property type="entry name" value="ATPase_P-typ_P_site"/>
</dbReference>
<dbReference type="InterPro" id="IPR023298">
    <property type="entry name" value="ATPase_P-typ_TM_dom_sf"/>
</dbReference>
<dbReference type="InterPro" id="IPR008250">
    <property type="entry name" value="ATPase_P-typ_transduc_dom_A_sf"/>
</dbReference>
<dbReference type="InterPro" id="IPR050510">
    <property type="entry name" value="Cation_transp_ATPase_P-type"/>
</dbReference>
<dbReference type="InterPro" id="IPR036412">
    <property type="entry name" value="HAD-like_sf"/>
</dbReference>
<dbReference type="InterPro" id="IPR023214">
    <property type="entry name" value="HAD_sf"/>
</dbReference>
<dbReference type="InterPro" id="IPR005775">
    <property type="entry name" value="P-type_ATPase_IIC"/>
</dbReference>
<dbReference type="InterPro" id="IPR001757">
    <property type="entry name" value="P_typ_ATPase"/>
</dbReference>
<dbReference type="InterPro" id="IPR044492">
    <property type="entry name" value="P_typ_ATPase_HD_dom"/>
</dbReference>
<dbReference type="NCBIfam" id="TIGR01106">
    <property type="entry name" value="ATPase-IIC_X-K"/>
    <property type="match status" value="1"/>
</dbReference>
<dbReference type="NCBIfam" id="TIGR01494">
    <property type="entry name" value="ATPase_P-type"/>
    <property type="match status" value="2"/>
</dbReference>
<dbReference type="PANTHER" id="PTHR43294:SF10">
    <property type="entry name" value="POTASSIUM-TRANSPORTING ATPASE ALPHA CHAIN 1"/>
    <property type="match status" value="1"/>
</dbReference>
<dbReference type="PANTHER" id="PTHR43294">
    <property type="entry name" value="SODIUM/POTASSIUM-TRANSPORTING ATPASE SUBUNIT ALPHA"/>
    <property type="match status" value="1"/>
</dbReference>
<dbReference type="Pfam" id="PF13246">
    <property type="entry name" value="Cation_ATPase"/>
    <property type="match status" value="1"/>
</dbReference>
<dbReference type="Pfam" id="PF00689">
    <property type="entry name" value="Cation_ATPase_C"/>
    <property type="match status" value="1"/>
</dbReference>
<dbReference type="Pfam" id="PF00690">
    <property type="entry name" value="Cation_ATPase_N"/>
    <property type="match status" value="1"/>
</dbReference>
<dbReference type="Pfam" id="PF00122">
    <property type="entry name" value="E1-E2_ATPase"/>
    <property type="match status" value="1"/>
</dbReference>
<dbReference type="Pfam" id="PF09040">
    <property type="entry name" value="H-K_ATPase_N"/>
    <property type="match status" value="1"/>
</dbReference>
<dbReference type="Pfam" id="PF00702">
    <property type="entry name" value="Hydrolase"/>
    <property type="match status" value="1"/>
</dbReference>
<dbReference type="PRINTS" id="PR00119">
    <property type="entry name" value="CATATPASE"/>
</dbReference>
<dbReference type="PRINTS" id="PR00121">
    <property type="entry name" value="NAKATPASE"/>
</dbReference>
<dbReference type="SFLD" id="SFLDS00003">
    <property type="entry name" value="Haloacid_Dehalogenase"/>
    <property type="match status" value="1"/>
</dbReference>
<dbReference type="SFLD" id="SFLDF00027">
    <property type="entry name" value="p-type_atpase"/>
    <property type="match status" value="1"/>
</dbReference>
<dbReference type="SMART" id="SM00831">
    <property type="entry name" value="Cation_ATPase_N"/>
    <property type="match status" value="1"/>
</dbReference>
<dbReference type="SUPFAM" id="SSF81653">
    <property type="entry name" value="Calcium ATPase, transduction domain A"/>
    <property type="match status" value="1"/>
</dbReference>
<dbReference type="SUPFAM" id="SSF81665">
    <property type="entry name" value="Calcium ATPase, transmembrane domain M"/>
    <property type="match status" value="1"/>
</dbReference>
<dbReference type="SUPFAM" id="SSF56784">
    <property type="entry name" value="HAD-like"/>
    <property type="match status" value="1"/>
</dbReference>
<dbReference type="SUPFAM" id="SSF81660">
    <property type="entry name" value="Metal cation-transporting ATPase, ATP-binding domain N"/>
    <property type="match status" value="1"/>
</dbReference>
<dbReference type="PROSITE" id="PS00154">
    <property type="entry name" value="ATPASE_E1_E2"/>
    <property type="match status" value="1"/>
</dbReference>
<name>ATP4A_MOUSE</name>
<reference key="1">
    <citation type="journal article" date="1995" name="Am. J. Physiol.">
        <title>Primary structure and functional expression of the mouse and frog alpha-subunit of the gastric H(+)-K(+)-ATPase.</title>
        <authorList>
            <person name="Mathews P.M."/>
            <person name="Claeys D."/>
            <person name="Jaisser F."/>
            <person name="Geering K."/>
            <person name="Horisberger J.-D."/>
            <person name="Kraehenbuhl J.-P."/>
            <person name="Rossier B.C."/>
        </authorList>
    </citation>
    <scope>NUCLEOTIDE SEQUENCE [MRNA]</scope>
    <scope>FUNCTION</scope>
    <scope>CATALYTIC ACTIVITY</scope>
    <source>
        <strain>BALB/cJ</strain>
        <tissue>Gastric mucosa</tissue>
    </source>
</reference>
<reference key="2">
    <citation type="journal article" date="2009" name="PLoS Biol.">
        <title>Lineage-specific biology revealed by a finished genome assembly of the mouse.</title>
        <authorList>
            <person name="Church D.M."/>
            <person name="Goodstadt L."/>
            <person name="Hillier L.W."/>
            <person name="Zody M.C."/>
            <person name="Goldstein S."/>
            <person name="She X."/>
            <person name="Bult C.J."/>
            <person name="Agarwala R."/>
            <person name="Cherry J.L."/>
            <person name="DiCuccio M."/>
            <person name="Hlavina W."/>
            <person name="Kapustin Y."/>
            <person name="Meric P."/>
            <person name="Maglott D."/>
            <person name="Birtle Z."/>
            <person name="Marques A.C."/>
            <person name="Graves T."/>
            <person name="Zhou S."/>
            <person name="Teague B."/>
            <person name="Potamousis K."/>
            <person name="Churas C."/>
            <person name="Place M."/>
            <person name="Herschleb J."/>
            <person name="Runnheim R."/>
            <person name="Forrest D."/>
            <person name="Amos-Landgraf J."/>
            <person name="Schwartz D.C."/>
            <person name="Cheng Z."/>
            <person name="Lindblad-Toh K."/>
            <person name="Eichler E.E."/>
            <person name="Ponting C.P."/>
        </authorList>
    </citation>
    <scope>NUCLEOTIDE SEQUENCE [LARGE SCALE GENOMIC DNA]</scope>
    <source>
        <strain>C57BL/6J</strain>
    </source>
</reference>
<reference key="3">
    <citation type="submission" date="2007-04" db="UniProtKB">
        <authorList>
            <person name="Lubec G."/>
            <person name="Kang S.U."/>
        </authorList>
    </citation>
    <scope>PROTEIN SEQUENCE OF 223-250; 370-387; 487-497; 623-635; 660-668 AND 777-784</scope>
    <scope>IDENTIFICATION BY MASS SPECTROMETRY</scope>
    <source>
        <strain>C57BL/6J</strain>
        <tissue>Brain</tissue>
    </source>
</reference>
<reference key="4">
    <citation type="journal article" date="2005" name="Science">
        <title>The transcriptional landscape of the mammalian genome.</title>
        <authorList>
            <person name="Carninci P."/>
            <person name="Kasukawa T."/>
            <person name="Katayama S."/>
            <person name="Gough J."/>
            <person name="Frith M.C."/>
            <person name="Maeda N."/>
            <person name="Oyama R."/>
            <person name="Ravasi T."/>
            <person name="Lenhard B."/>
            <person name="Wells C."/>
            <person name="Kodzius R."/>
            <person name="Shimokawa K."/>
            <person name="Bajic V.B."/>
            <person name="Brenner S.E."/>
            <person name="Batalov S."/>
            <person name="Forrest A.R."/>
            <person name="Zavolan M."/>
            <person name="Davis M.J."/>
            <person name="Wilming L.G."/>
            <person name="Aidinis V."/>
            <person name="Allen J.E."/>
            <person name="Ambesi-Impiombato A."/>
            <person name="Apweiler R."/>
            <person name="Aturaliya R.N."/>
            <person name="Bailey T.L."/>
            <person name="Bansal M."/>
            <person name="Baxter L."/>
            <person name="Beisel K.W."/>
            <person name="Bersano T."/>
            <person name="Bono H."/>
            <person name="Chalk A.M."/>
            <person name="Chiu K.P."/>
            <person name="Choudhary V."/>
            <person name="Christoffels A."/>
            <person name="Clutterbuck D.R."/>
            <person name="Crowe M.L."/>
            <person name="Dalla E."/>
            <person name="Dalrymple B.P."/>
            <person name="de Bono B."/>
            <person name="Della Gatta G."/>
            <person name="di Bernardo D."/>
            <person name="Down T."/>
            <person name="Engstrom P."/>
            <person name="Fagiolini M."/>
            <person name="Faulkner G."/>
            <person name="Fletcher C.F."/>
            <person name="Fukushima T."/>
            <person name="Furuno M."/>
            <person name="Futaki S."/>
            <person name="Gariboldi M."/>
            <person name="Georgii-Hemming P."/>
            <person name="Gingeras T.R."/>
            <person name="Gojobori T."/>
            <person name="Green R.E."/>
            <person name="Gustincich S."/>
            <person name="Harbers M."/>
            <person name="Hayashi Y."/>
            <person name="Hensch T.K."/>
            <person name="Hirokawa N."/>
            <person name="Hill D."/>
            <person name="Huminiecki L."/>
            <person name="Iacono M."/>
            <person name="Ikeo K."/>
            <person name="Iwama A."/>
            <person name="Ishikawa T."/>
            <person name="Jakt M."/>
            <person name="Kanapin A."/>
            <person name="Katoh M."/>
            <person name="Kawasawa Y."/>
            <person name="Kelso J."/>
            <person name="Kitamura H."/>
            <person name="Kitano H."/>
            <person name="Kollias G."/>
            <person name="Krishnan S.P."/>
            <person name="Kruger A."/>
            <person name="Kummerfeld S.K."/>
            <person name="Kurochkin I.V."/>
            <person name="Lareau L.F."/>
            <person name="Lazarevic D."/>
            <person name="Lipovich L."/>
            <person name="Liu J."/>
            <person name="Liuni S."/>
            <person name="McWilliam S."/>
            <person name="Madan Babu M."/>
            <person name="Madera M."/>
            <person name="Marchionni L."/>
            <person name="Matsuda H."/>
            <person name="Matsuzawa S."/>
            <person name="Miki H."/>
            <person name="Mignone F."/>
            <person name="Miyake S."/>
            <person name="Morris K."/>
            <person name="Mottagui-Tabar S."/>
            <person name="Mulder N."/>
            <person name="Nakano N."/>
            <person name="Nakauchi H."/>
            <person name="Ng P."/>
            <person name="Nilsson R."/>
            <person name="Nishiguchi S."/>
            <person name="Nishikawa S."/>
            <person name="Nori F."/>
            <person name="Ohara O."/>
            <person name="Okazaki Y."/>
            <person name="Orlando V."/>
            <person name="Pang K.C."/>
            <person name="Pavan W.J."/>
            <person name="Pavesi G."/>
            <person name="Pesole G."/>
            <person name="Petrovsky N."/>
            <person name="Piazza S."/>
            <person name="Reed J."/>
            <person name="Reid J.F."/>
            <person name="Ring B.Z."/>
            <person name="Ringwald M."/>
            <person name="Rost B."/>
            <person name="Ruan Y."/>
            <person name="Salzberg S.L."/>
            <person name="Sandelin A."/>
            <person name="Schneider C."/>
            <person name="Schoenbach C."/>
            <person name="Sekiguchi K."/>
            <person name="Semple C.A."/>
            <person name="Seno S."/>
            <person name="Sessa L."/>
            <person name="Sheng Y."/>
            <person name="Shibata Y."/>
            <person name="Shimada H."/>
            <person name="Shimada K."/>
            <person name="Silva D."/>
            <person name="Sinclair B."/>
            <person name="Sperling S."/>
            <person name="Stupka E."/>
            <person name="Sugiura K."/>
            <person name="Sultana R."/>
            <person name="Takenaka Y."/>
            <person name="Taki K."/>
            <person name="Tammoja K."/>
            <person name="Tan S.L."/>
            <person name="Tang S."/>
            <person name="Taylor M.S."/>
            <person name="Tegner J."/>
            <person name="Teichmann S.A."/>
            <person name="Ueda H.R."/>
            <person name="van Nimwegen E."/>
            <person name="Verardo R."/>
            <person name="Wei C.L."/>
            <person name="Yagi K."/>
            <person name="Yamanishi H."/>
            <person name="Zabarovsky E."/>
            <person name="Zhu S."/>
            <person name="Zimmer A."/>
            <person name="Hide W."/>
            <person name="Bult C."/>
            <person name="Grimmond S.M."/>
            <person name="Teasdale R.D."/>
            <person name="Liu E.T."/>
            <person name="Brusic V."/>
            <person name="Quackenbush J."/>
            <person name="Wahlestedt C."/>
            <person name="Mattick J.S."/>
            <person name="Hume D.A."/>
            <person name="Kai C."/>
            <person name="Sasaki D."/>
            <person name="Tomaru Y."/>
            <person name="Fukuda S."/>
            <person name="Kanamori-Katayama M."/>
            <person name="Suzuki M."/>
            <person name="Aoki J."/>
            <person name="Arakawa T."/>
            <person name="Iida J."/>
            <person name="Imamura K."/>
            <person name="Itoh M."/>
            <person name="Kato T."/>
            <person name="Kawaji H."/>
            <person name="Kawagashira N."/>
            <person name="Kawashima T."/>
            <person name="Kojima M."/>
            <person name="Kondo S."/>
            <person name="Konno H."/>
            <person name="Nakano K."/>
            <person name="Ninomiya N."/>
            <person name="Nishio T."/>
            <person name="Okada M."/>
            <person name="Plessy C."/>
            <person name="Shibata K."/>
            <person name="Shiraki T."/>
            <person name="Suzuki S."/>
            <person name="Tagami M."/>
            <person name="Waki K."/>
            <person name="Watahiki A."/>
            <person name="Okamura-Oho Y."/>
            <person name="Suzuki H."/>
            <person name="Kawai J."/>
            <person name="Hayashizaki Y."/>
        </authorList>
    </citation>
    <scope>NUCLEOTIDE SEQUENCE [LARGE SCALE MRNA] OF 823-1034</scope>
    <source>
        <strain>C57BL/6J</strain>
        <tissue>Tongue</tissue>
    </source>
</reference>
<reference key="5">
    <citation type="journal article" date="2000" name="J. Biol. Chem.">
        <title>Stomachs of mice lacking the gastric H,K-ATPase alpha -subunit have achlorhydria, abnormal parietal cells, and ciliated metaplasia.</title>
        <authorList>
            <person name="Spicer Z."/>
            <person name="Miller M.L."/>
            <person name="Andringa A."/>
            <person name="Riddle T.M."/>
            <person name="Duffy J.J."/>
            <person name="Doetschman T."/>
            <person name="Shull G.E."/>
        </authorList>
    </citation>
    <scope>DISRUPTION PHENOTYPE</scope>
    <scope>FUNCTION</scope>
    <scope>TISSUE SPECIFICITY</scope>
</reference>
<feature type="chain" id="PRO_0000046254" description="Potassium-transporting ATPase alpha chain 1">
    <location>
        <begin position="1"/>
        <end position="1034"/>
    </location>
</feature>
<feature type="topological domain" description="Cytoplasmic" evidence="7">
    <location>
        <begin position="1"/>
        <end position="97"/>
    </location>
</feature>
<feature type="transmembrane region" description="Helical" evidence="7">
    <location>
        <begin position="98"/>
        <end position="118"/>
    </location>
</feature>
<feature type="topological domain" description="Lumenal" evidence="7">
    <location>
        <begin position="119"/>
        <end position="141"/>
    </location>
</feature>
<feature type="transmembrane region" description="Helical" evidence="7">
    <location>
        <begin position="142"/>
        <end position="162"/>
    </location>
</feature>
<feature type="topological domain" description="Cytoplasmic" evidence="7">
    <location>
        <begin position="163"/>
        <end position="298"/>
    </location>
</feature>
<feature type="transmembrane region" description="Helical" evidence="7">
    <location>
        <begin position="299"/>
        <end position="318"/>
    </location>
</feature>
<feature type="topological domain" description="Lumenal" evidence="7">
    <location>
        <begin position="319"/>
        <end position="330"/>
    </location>
</feature>
<feature type="transmembrane region" description="Helical" evidence="7">
    <location>
        <begin position="331"/>
        <end position="348"/>
    </location>
</feature>
<feature type="topological domain" description="Cytoplasmic" evidence="7">
    <location>
        <begin position="349"/>
        <end position="782"/>
    </location>
</feature>
<feature type="transmembrane region" description="Helical" evidence="7">
    <location>
        <begin position="783"/>
        <end position="802"/>
    </location>
</feature>
<feature type="topological domain" description="Lumenal" evidence="7">
    <location>
        <begin position="803"/>
        <end position="812"/>
    </location>
</feature>
<feature type="transmembrane region" description="Helical" evidence="7">
    <location>
        <begin position="813"/>
        <end position="833"/>
    </location>
</feature>
<feature type="topological domain" description="Cytoplasmic" evidence="7">
    <location>
        <begin position="834"/>
        <end position="853"/>
    </location>
</feature>
<feature type="transmembrane region" description="Helical" evidence="7">
    <location>
        <begin position="854"/>
        <end position="876"/>
    </location>
</feature>
<feature type="topological domain" description="Lumenal" evidence="7">
    <location>
        <begin position="877"/>
        <end position="928"/>
    </location>
</feature>
<feature type="transmembrane region" description="Helical" evidence="7">
    <location>
        <begin position="929"/>
        <end position="948"/>
    </location>
</feature>
<feature type="topological domain" description="Cytoplasmic" evidence="7">
    <location>
        <begin position="949"/>
        <end position="962"/>
    </location>
</feature>
<feature type="transmembrane region" description="Helical" evidence="7">
    <location>
        <begin position="963"/>
        <end position="981"/>
    </location>
</feature>
<feature type="topological domain" description="Lumenal" evidence="7">
    <location>
        <begin position="982"/>
        <end position="996"/>
    </location>
</feature>
<feature type="transmembrane region" description="Helical" evidence="7">
    <location>
        <begin position="997"/>
        <end position="1017"/>
    </location>
</feature>
<feature type="topological domain" description="Cytoplasmic" evidence="7">
    <location>
        <begin position="1018"/>
        <end position="1034"/>
    </location>
</feature>
<feature type="region of interest" description="Disordered" evidence="8">
    <location>
        <begin position="14"/>
        <end position="41"/>
    </location>
</feature>
<feature type="compositionally biased region" description="Basic residues" evidence="8">
    <location>
        <begin position="26"/>
        <end position="39"/>
    </location>
</feature>
<feature type="active site" description="4-aspartylphosphate intermediate" evidence="3">
    <location>
        <position position="386"/>
    </location>
</feature>
<feature type="binding site" evidence="3">
    <location>
        <position position="339"/>
    </location>
    <ligand>
        <name>K(+)</name>
        <dbReference type="ChEBI" id="CHEBI:29103"/>
    </ligand>
</feature>
<feature type="binding site" evidence="3">
    <location>
        <position position="340"/>
    </location>
    <ligand>
        <name>K(+)</name>
        <dbReference type="ChEBI" id="CHEBI:29103"/>
    </ligand>
</feature>
<feature type="binding site" evidence="3">
    <location>
        <position position="342"/>
    </location>
    <ligand>
        <name>K(+)</name>
        <dbReference type="ChEBI" id="CHEBI:29103"/>
    </ligand>
</feature>
<feature type="binding site" evidence="3">
    <location>
        <position position="344"/>
    </location>
    <ligand>
        <name>K(+)</name>
        <dbReference type="ChEBI" id="CHEBI:29103"/>
    </ligand>
</feature>
<feature type="binding site" evidence="3">
    <location>
        <position position="386"/>
    </location>
    <ligand>
        <name>Mg(2+)</name>
        <dbReference type="ChEBI" id="CHEBI:18420"/>
    </ligand>
</feature>
<feature type="binding site" evidence="3">
    <location>
        <position position="388"/>
    </location>
    <ligand>
        <name>Mg(2+)</name>
        <dbReference type="ChEBI" id="CHEBI:18420"/>
    </ligand>
</feature>
<feature type="binding site" evidence="3">
    <location>
        <position position="727"/>
    </location>
    <ligand>
        <name>Mg(2+)</name>
        <dbReference type="ChEBI" id="CHEBI:18420"/>
    </ligand>
</feature>
<feature type="binding site" evidence="1">
    <location>
        <position position="731"/>
    </location>
    <ligand>
        <name>Mg(2+)</name>
        <dbReference type="ChEBI" id="CHEBI:18420"/>
    </ligand>
</feature>
<feature type="binding site" evidence="3">
    <location>
        <position position="796"/>
    </location>
    <ligand>
        <name>K(+)</name>
        <dbReference type="ChEBI" id="CHEBI:29103"/>
    </ligand>
</feature>
<feature type="binding site" evidence="3">
    <location>
        <position position="821"/>
    </location>
    <ligand>
        <name>K(+)</name>
        <dbReference type="ChEBI" id="CHEBI:29103"/>
    </ligand>
</feature>
<feature type="modified residue" description="Phosphotyrosine" evidence="3">
    <location>
        <position position="7"/>
    </location>
</feature>
<feature type="modified residue" description="Phosphotyrosine" evidence="3">
    <location>
        <position position="10"/>
    </location>
</feature>
<feature type="modified residue" description="Phosphoserine" evidence="3">
    <location>
        <position position="27"/>
    </location>
</feature>
<feature type="modified residue" description="Phosphoserine" evidence="6">
    <location>
        <position position="462"/>
    </location>
</feature>
<feature type="modified residue" description="Phosphoserine" evidence="5">
    <location>
        <position position="600"/>
    </location>
</feature>
<feature type="modified residue" description="Phosphoserine" evidence="2">
    <location>
        <position position="839"/>
    </location>
</feature>
<feature type="modified residue" description="Phosphoserine; by PKA" evidence="1">
    <location>
        <position position="953"/>
    </location>
</feature>
<feature type="sequence conflict" description="In Ref. 1; AAA79514." evidence="12" ref="1">
    <location>
        <position position="4"/>
    </location>
</feature>
<feature type="sequence conflict" description="In Ref. 1; AAA79514." evidence="12" ref="1">
    <original>N</original>
    <variation>K</variation>
    <location>
        <position position="6"/>
    </location>
</feature>
<feature type="sequence conflict" description="In Ref. 1; AAA79514." evidence="12" ref="1">
    <original>I</original>
    <variation>T</variation>
    <location>
        <position position="495"/>
    </location>
</feature>
<feature type="sequence conflict" description="In Ref. 4; BAB26432." evidence="12" ref="4">
    <original>S</original>
    <variation>F</variation>
    <location>
        <position position="829"/>
    </location>
</feature>
<feature type="sequence conflict" description="In Ref. 1; AAA79514." evidence="12" ref="1">
    <original>EL</original>
    <variation>DF</variation>
    <location>
        <begin position="1031"/>
        <end position="1032"/>
    </location>
</feature>
<organism>
    <name type="scientific">Mus musculus</name>
    <name type="common">Mouse</name>
    <dbReference type="NCBI Taxonomy" id="10090"/>
    <lineage>
        <taxon>Eukaryota</taxon>
        <taxon>Metazoa</taxon>
        <taxon>Chordata</taxon>
        <taxon>Craniata</taxon>
        <taxon>Vertebrata</taxon>
        <taxon>Euteleostomi</taxon>
        <taxon>Mammalia</taxon>
        <taxon>Eutheria</taxon>
        <taxon>Euarchontoglires</taxon>
        <taxon>Glires</taxon>
        <taxon>Rodentia</taxon>
        <taxon>Myomorpha</taxon>
        <taxon>Muroidea</taxon>
        <taxon>Muridae</taxon>
        <taxon>Murinae</taxon>
        <taxon>Mus</taxon>
        <taxon>Mus</taxon>
    </lineage>
</organism>
<comment type="function">
    <text evidence="3 9 10">The catalytic subunit of the gastric H(+)/K(+) ATPase pump which transports H(+) ions in exchange for K(+) ions across the apical membrane of parietal cells (PubMed:7762614). Uses ATP as an energy source to pump H(+) ions to the gastric lumen while transporting K(+) ion from the lumen into the cell (PubMed:7762614). Remarkably generates a million-fold proton gradient across the gastric parietal cell membrane, acidifying the gastric juice down to pH 1 (PubMed:10764766). Within a transport cycle, the transfer of a H(+) ion across the membrane is coupled to ATP hydrolysis and is associated with a transient phosphorylation that shifts the pump conformation from inward-facing (E1) to outward-facing state (E2). The release of the H(+) ion in the stomach lumen is followed by binding of K(+) ion converting the pump conformation back to the E1 state (By similarity) (PubMed:7762614).</text>
</comment>
<comment type="catalytic activity">
    <reaction evidence="10">
        <text>K(+)(out) + ATP + H2O + H(+)(in) = K(+)(in) + ADP + phosphate + 2 H(+)(out)</text>
        <dbReference type="Rhea" id="RHEA:22044"/>
        <dbReference type="ChEBI" id="CHEBI:15377"/>
        <dbReference type="ChEBI" id="CHEBI:15378"/>
        <dbReference type="ChEBI" id="CHEBI:29103"/>
        <dbReference type="ChEBI" id="CHEBI:30616"/>
        <dbReference type="ChEBI" id="CHEBI:43474"/>
        <dbReference type="ChEBI" id="CHEBI:456216"/>
        <dbReference type="EC" id="7.2.2.19"/>
    </reaction>
    <physiologicalReaction direction="left-to-right" evidence="13">
        <dbReference type="Rhea" id="RHEA:22045"/>
    </physiologicalReaction>
</comment>
<comment type="subunit">
    <text evidence="3">The gastric H(+)/K(+) ATPase pump is composed of the catalytic alpha subunit ATP4A and the regulatory beta subunit ATP4B. Interacts (via the P-domain) with ATP4B (via N-terminus); this interaction stabilizes the lumenal-open E2 conformation state and prevents the reverse reaction of the transport cycle.</text>
</comment>
<comment type="subcellular location">
    <subcellularLocation>
        <location evidence="4">Apical cell membrane</location>
        <topology evidence="7">Multi-pass membrane protein</topology>
    </subcellularLocation>
    <text evidence="4">Localized in the apical canalicular membrane of parietal cells (By similarity).</text>
</comment>
<comment type="tissue specificity">
    <text evidence="9">Expressed in parietal cells (at protein level).</text>
</comment>
<comment type="disruption phenotype">
    <text evidence="9">Mutant mice are born at the expected Mendelian rate. They develop achlorhydria, hypergastrinemia and ciliated metaplasia. The parietal cell viability or chief cell differentiation are normal when compared to wild-type littermates. Mutant parietal cells have abnormal morphology characterized by dilated canaliculi with few microvilli, spherical vesicles rather than normal tubulovesicles and enlarged mitochondria filled with concentric cristae.</text>
</comment>
<comment type="similarity">
    <text evidence="12">Belongs to the cation transport ATPase (P-type) (TC 3.A.3) family. Type IIC subfamily.</text>
</comment>
<proteinExistence type="evidence at protein level"/>